<keyword id="KW-0216">Detoxification</keyword>
<keyword id="KW-0378">Hydrolase</keyword>
<keyword id="KW-0479">Metal-binding</keyword>
<keyword id="KW-1185">Reference proteome</keyword>
<keyword id="KW-0862">Zinc</keyword>
<reference key="1">
    <citation type="journal article" date="1995" name="Science">
        <title>Whole-genome random sequencing and assembly of Haemophilus influenzae Rd.</title>
        <authorList>
            <person name="Fleischmann R.D."/>
            <person name="Adams M.D."/>
            <person name="White O."/>
            <person name="Clayton R.A."/>
            <person name="Kirkness E.F."/>
            <person name="Kerlavage A.R."/>
            <person name="Bult C.J."/>
            <person name="Tomb J.-F."/>
            <person name="Dougherty B.A."/>
            <person name="Merrick J.M."/>
            <person name="McKenney K."/>
            <person name="Sutton G.G."/>
            <person name="FitzHugh W."/>
            <person name="Fields C.A."/>
            <person name="Gocayne J.D."/>
            <person name="Scott J.D."/>
            <person name="Shirley R."/>
            <person name="Liu L.-I."/>
            <person name="Glodek A."/>
            <person name="Kelley J.M."/>
            <person name="Weidman J.F."/>
            <person name="Phillips C.A."/>
            <person name="Spriggs T."/>
            <person name="Hedblom E."/>
            <person name="Cotton M.D."/>
            <person name="Utterback T.R."/>
            <person name="Hanna M.C."/>
            <person name="Nguyen D.T."/>
            <person name="Saudek D.M."/>
            <person name="Brandon R.C."/>
            <person name="Fine L.D."/>
            <person name="Fritchman J.L."/>
            <person name="Fuhrmann J.L."/>
            <person name="Geoghagen N.S.M."/>
            <person name="Gnehm C.L."/>
            <person name="McDonald L.A."/>
            <person name="Small K.V."/>
            <person name="Fraser C.M."/>
            <person name="Smith H.O."/>
            <person name="Venter J.C."/>
        </authorList>
    </citation>
    <scope>NUCLEOTIDE SEQUENCE [LARGE SCALE GENOMIC DNA]</scope>
    <source>
        <strain>ATCC 51907 / DSM 11121 / KW20 / Rd</strain>
    </source>
</reference>
<gene>
    <name evidence="1" type="primary">gloC</name>
    <name type="ordered locus">HI_1663</name>
</gene>
<dbReference type="EC" id="3.1.2.6" evidence="1"/>
<dbReference type="EMBL" id="L42023">
    <property type="protein sequence ID" value="AAC23309.1"/>
    <property type="molecule type" value="Genomic_DNA"/>
</dbReference>
<dbReference type="PIR" id="D64174">
    <property type="entry name" value="D64174"/>
</dbReference>
<dbReference type="RefSeq" id="NP_439805.1">
    <property type="nucleotide sequence ID" value="NC_000907.1"/>
</dbReference>
<dbReference type="SMR" id="Q57544"/>
<dbReference type="STRING" id="71421.HI_1663"/>
<dbReference type="EnsemblBacteria" id="AAC23309">
    <property type="protein sequence ID" value="AAC23309"/>
    <property type="gene ID" value="HI_1663"/>
</dbReference>
<dbReference type="KEGG" id="hin:HI_1663"/>
<dbReference type="PATRIC" id="fig|71421.8.peg.1741"/>
<dbReference type="eggNOG" id="COG0491">
    <property type="taxonomic scope" value="Bacteria"/>
</dbReference>
<dbReference type="HOGENOM" id="CLU_030571_5_0_6"/>
<dbReference type="OrthoDB" id="9802991at2"/>
<dbReference type="PhylomeDB" id="Q57544"/>
<dbReference type="BioCyc" id="HINF71421:G1GJ1-1680-MONOMER"/>
<dbReference type="UniPathway" id="UPA00619">
    <property type="reaction ID" value="UER00676"/>
</dbReference>
<dbReference type="Proteomes" id="UP000000579">
    <property type="component" value="Chromosome"/>
</dbReference>
<dbReference type="GO" id="GO:0004416">
    <property type="term" value="F:hydroxyacylglutathione hydrolase activity"/>
    <property type="evidence" value="ECO:0007669"/>
    <property type="project" value="UniProtKB-EC"/>
</dbReference>
<dbReference type="GO" id="GO:0046872">
    <property type="term" value="F:metal ion binding"/>
    <property type="evidence" value="ECO:0007669"/>
    <property type="project" value="UniProtKB-KW"/>
</dbReference>
<dbReference type="GO" id="GO:0009636">
    <property type="term" value="P:response to toxic substance"/>
    <property type="evidence" value="ECO:0007669"/>
    <property type="project" value="UniProtKB-KW"/>
</dbReference>
<dbReference type="CDD" id="cd07737">
    <property type="entry name" value="YcbL-like_MBL-fold"/>
    <property type="match status" value="1"/>
</dbReference>
<dbReference type="Gene3D" id="3.60.15.10">
    <property type="entry name" value="Ribonuclease Z/Hydroxyacylglutathione hydrolase-like"/>
    <property type="match status" value="1"/>
</dbReference>
<dbReference type="InterPro" id="IPR051453">
    <property type="entry name" value="MBL_Glyoxalase_II"/>
</dbReference>
<dbReference type="InterPro" id="IPR001279">
    <property type="entry name" value="Metallo-B-lactamas"/>
</dbReference>
<dbReference type="InterPro" id="IPR036866">
    <property type="entry name" value="RibonucZ/Hydroxyglut_hydro"/>
</dbReference>
<dbReference type="PANTHER" id="PTHR46233">
    <property type="entry name" value="HYDROXYACYLGLUTATHIONE HYDROLASE GLOC"/>
    <property type="match status" value="1"/>
</dbReference>
<dbReference type="PANTHER" id="PTHR46233:SF3">
    <property type="entry name" value="HYDROXYACYLGLUTATHIONE HYDROLASE GLOC"/>
    <property type="match status" value="1"/>
</dbReference>
<dbReference type="Pfam" id="PF00753">
    <property type="entry name" value="Lactamase_B"/>
    <property type="match status" value="1"/>
</dbReference>
<dbReference type="SMART" id="SM00849">
    <property type="entry name" value="Lactamase_B"/>
    <property type="match status" value="1"/>
</dbReference>
<dbReference type="SUPFAM" id="SSF56281">
    <property type="entry name" value="Metallo-hydrolase/oxidoreductase"/>
    <property type="match status" value="1"/>
</dbReference>
<accession>Q57544</accession>
<feature type="chain" id="PRO_0000192358" description="Hydroxyacylglutathione hydrolase GloC">
    <location>
        <begin position="1"/>
        <end position="212"/>
    </location>
</feature>
<feature type="binding site" evidence="2">
    <location>
        <position position="55"/>
    </location>
    <ligand>
        <name>Zn(2+)</name>
        <dbReference type="ChEBI" id="CHEBI:29105"/>
        <label>1</label>
    </ligand>
</feature>
<feature type="binding site" evidence="2">
    <location>
        <position position="57"/>
    </location>
    <ligand>
        <name>Zn(2+)</name>
        <dbReference type="ChEBI" id="CHEBI:29105"/>
        <label>1</label>
    </ligand>
</feature>
<feature type="binding site" evidence="2">
    <location>
        <position position="59"/>
    </location>
    <ligand>
        <name>Zn(2+)</name>
        <dbReference type="ChEBI" id="CHEBI:29105"/>
        <label>2</label>
    </ligand>
</feature>
<feature type="binding site" evidence="2">
    <location>
        <position position="60"/>
    </location>
    <ligand>
        <name>Zn(2+)</name>
        <dbReference type="ChEBI" id="CHEBI:29105"/>
        <label>2</label>
    </ligand>
</feature>
<feature type="binding site" evidence="2">
    <location>
        <position position="132"/>
    </location>
    <ligand>
        <name>Zn(2+)</name>
        <dbReference type="ChEBI" id="CHEBI:29105"/>
        <label>1</label>
    </ligand>
</feature>
<feature type="binding site" evidence="2">
    <location>
        <position position="151"/>
    </location>
    <ligand>
        <name>Zn(2+)</name>
        <dbReference type="ChEBI" id="CHEBI:29105"/>
        <label>1</label>
    </ligand>
</feature>
<feature type="binding site" evidence="2">
    <location>
        <position position="151"/>
    </location>
    <ligand>
        <name>Zn(2+)</name>
        <dbReference type="ChEBI" id="CHEBI:29105"/>
        <label>2</label>
    </ligand>
</feature>
<feature type="binding site" evidence="2">
    <location>
        <position position="192"/>
    </location>
    <ligand>
        <name>Zn(2+)</name>
        <dbReference type="ChEBI" id="CHEBI:29105"/>
        <label>2</label>
    </ligand>
</feature>
<evidence type="ECO:0000250" key="1">
    <source>
        <dbReference type="UniProtKB" id="P75849"/>
    </source>
</evidence>
<evidence type="ECO:0000250" key="2">
    <source>
        <dbReference type="UniProtKB" id="Q16775"/>
    </source>
</evidence>
<evidence type="ECO:0000305" key="3"/>
<protein>
    <recommendedName>
        <fullName evidence="1">Hydroxyacylglutathione hydrolase GloC</fullName>
        <ecNumber evidence="1">3.1.2.6</ecNumber>
    </recommendedName>
    <alternativeName>
        <fullName evidence="1">Accessory type II glyoxalase</fullName>
    </alternativeName>
    <alternativeName>
        <fullName evidence="1">Glyoxalase II 2</fullName>
        <shortName evidence="1">GlxII-2</shortName>
    </alternativeName>
</protein>
<organism>
    <name type="scientific">Haemophilus influenzae (strain ATCC 51907 / DSM 11121 / KW20 / Rd)</name>
    <dbReference type="NCBI Taxonomy" id="71421"/>
    <lineage>
        <taxon>Bacteria</taxon>
        <taxon>Pseudomonadati</taxon>
        <taxon>Pseudomonadota</taxon>
        <taxon>Gammaproteobacteria</taxon>
        <taxon>Pasteurellales</taxon>
        <taxon>Pasteurellaceae</taxon>
        <taxon>Haemophilus</taxon>
    </lineage>
</organism>
<proteinExistence type="inferred from homology"/>
<name>GLO22_HAEIN</name>
<sequence length="212" mass="23882">MNIEIIPVTAFQQNCSLIWDDEKNAAIIDPGGEAERLIQRIEELDLNLKVLLLTHGHLDHVGAAMQLKQHFGVEIWGSNEKDKFLFESLPEQAQRFGLPNIDAFLPDRWFNQEGEILKLDGFNFEILHLPGHTPGHIGFIEHEKKVAFTGDVLFQGGIGRTDFPRGDYETLISSIRTKLLPLNDDIIIIAGHGSYTTIGQEKRSNPFLNSKS</sequence>
<comment type="function">
    <text evidence="1">Type II glyoxalase, isozyme of GloB, that hydrolyzes (R)-S-lactoylglutathione to (R)-lactate and glutathione. Plays a role in methylglyoxal (MG) detoxification.</text>
</comment>
<comment type="catalytic activity">
    <reaction evidence="1">
        <text>an S-(2-hydroxyacyl)glutathione + H2O = a 2-hydroxy carboxylate + glutathione + H(+)</text>
        <dbReference type="Rhea" id="RHEA:21864"/>
        <dbReference type="ChEBI" id="CHEBI:15377"/>
        <dbReference type="ChEBI" id="CHEBI:15378"/>
        <dbReference type="ChEBI" id="CHEBI:57925"/>
        <dbReference type="ChEBI" id="CHEBI:58896"/>
        <dbReference type="ChEBI" id="CHEBI:71261"/>
        <dbReference type="EC" id="3.1.2.6"/>
    </reaction>
</comment>
<comment type="catalytic activity">
    <reaction evidence="1">
        <text>(R)-S-lactoylglutathione + H2O = (R)-lactate + glutathione + H(+)</text>
        <dbReference type="Rhea" id="RHEA:25245"/>
        <dbReference type="ChEBI" id="CHEBI:15377"/>
        <dbReference type="ChEBI" id="CHEBI:15378"/>
        <dbReference type="ChEBI" id="CHEBI:16004"/>
        <dbReference type="ChEBI" id="CHEBI:57474"/>
        <dbReference type="ChEBI" id="CHEBI:57925"/>
        <dbReference type="EC" id="3.1.2.6"/>
    </reaction>
</comment>
<comment type="cofactor">
    <cofactor evidence="2">
        <name>Zn(2+)</name>
        <dbReference type="ChEBI" id="CHEBI:29105"/>
    </cofactor>
    <text evidence="2">Binds 2 Zn(2+) ions per subunit.</text>
</comment>
<comment type="pathway">
    <text evidence="1">Secondary metabolite metabolism; methylglyoxal degradation; (R)-lactate from methylglyoxal: step 2/2.</text>
</comment>
<comment type="similarity">
    <text evidence="3">Belongs to the metallo-beta-lactamase superfamily. Glyoxalase II family.</text>
</comment>